<feature type="propeptide" id="PRO_0000031319" evidence="1">
    <location>
        <begin position="1"/>
        <end position="2"/>
    </location>
</feature>
<feature type="chain" id="PRO_0000031320" description="Ribulose bisphosphate carboxylase large chain">
    <location>
        <begin position="3"/>
        <end position="478"/>
    </location>
</feature>
<feature type="active site" description="Proton acceptor" evidence="1">
    <location>
        <position position="175"/>
    </location>
</feature>
<feature type="active site" description="Proton acceptor" evidence="1">
    <location>
        <position position="294"/>
    </location>
</feature>
<feature type="binding site" description="in homodimeric partner" evidence="1">
    <location>
        <position position="123"/>
    </location>
    <ligand>
        <name>substrate</name>
    </ligand>
</feature>
<feature type="binding site" evidence="1">
    <location>
        <position position="173"/>
    </location>
    <ligand>
        <name>substrate</name>
    </ligand>
</feature>
<feature type="binding site" evidence="1">
    <location>
        <position position="177"/>
    </location>
    <ligand>
        <name>substrate</name>
    </ligand>
</feature>
<feature type="binding site" description="via carbamate group" evidence="1">
    <location>
        <position position="201"/>
    </location>
    <ligand>
        <name>Mg(2+)</name>
        <dbReference type="ChEBI" id="CHEBI:18420"/>
    </ligand>
</feature>
<feature type="binding site" evidence="1">
    <location>
        <position position="203"/>
    </location>
    <ligand>
        <name>Mg(2+)</name>
        <dbReference type="ChEBI" id="CHEBI:18420"/>
    </ligand>
</feature>
<feature type="binding site" evidence="1">
    <location>
        <position position="204"/>
    </location>
    <ligand>
        <name>Mg(2+)</name>
        <dbReference type="ChEBI" id="CHEBI:18420"/>
    </ligand>
</feature>
<feature type="binding site" evidence="1">
    <location>
        <position position="295"/>
    </location>
    <ligand>
        <name>substrate</name>
    </ligand>
</feature>
<feature type="binding site" evidence="1">
    <location>
        <position position="327"/>
    </location>
    <ligand>
        <name>substrate</name>
    </ligand>
</feature>
<feature type="binding site" evidence="1">
    <location>
        <position position="379"/>
    </location>
    <ligand>
        <name>substrate</name>
    </ligand>
</feature>
<feature type="site" description="Transition state stabilizer" evidence="1">
    <location>
        <position position="334"/>
    </location>
</feature>
<feature type="modified residue" description="N-acetylproline" evidence="1">
    <location>
        <position position="3"/>
    </location>
</feature>
<feature type="modified residue" description="N6,N6,N6-trimethyllysine" evidence="1">
    <location>
        <position position="14"/>
    </location>
</feature>
<feature type="modified residue" description="N6-carboxylysine" evidence="1">
    <location>
        <position position="201"/>
    </location>
</feature>
<feature type="disulfide bond" description="Interchain; in linked form" evidence="1">
    <location>
        <position position="247"/>
    </location>
</feature>
<proteinExistence type="inferred from homology"/>
<geneLocation type="chloroplast"/>
<evidence type="ECO:0000255" key="1">
    <source>
        <dbReference type="HAMAP-Rule" id="MF_01338"/>
    </source>
</evidence>
<gene>
    <name evidence="1" type="primary">rbcL</name>
</gene>
<keyword id="KW-0007">Acetylation</keyword>
<keyword id="KW-0113">Calvin cycle</keyword>
<keyword id="KW-0120">Carbon dioxide fixation</keyword>
<keyword id="KW-0150">Chloroplast</keyword>
<keyword id="KW-1015">Disulfide bond</keyword>
<keyword id="KW-0456">Lyase</keyword>
<keyword id="KW-0460">Magnesium</keyword>
<keyword id="KW-0479">Metal-binding</keyword>
<keyword id="KW-0488">Methylation</keyword>
<keyword id="KW-0503">Monooxygenase</keyword>
<keyword id="KW-0560">Oxidoreductase</keyword>
<keyword id="KW-0601">Photorespiration</keyword>
<keyword id="KW-0602">Photosynthesis</keyword>
<keyword id="KW-0934">Plastid</keyword>
<sequence>MSPQTETKASVGFKAGVKDYKLTYYTPEYETKDTDILAAFRVTPQPGVPPEEAGAAVAAESSTGTWTTVWTDGLTSLDRYKGRCYHIEPVPGEEDQYICYVAYPLDLFEEGSVTNMFTSIVGNVFGFKALRALRLEDLRIPPTYSKTFQGPPHGIQVERDKLNKYGRPLLGCTIKPKLGLSAKNYGRACYECLRGGLDFTKDDENVNSQPFMRWRDRFVFCAEAIYKAQAETGEIKGHYLNATAGTCEEMMKRAIFARELGVPIVMHDYLTGGFTANTSLAMYCRDNGLLLHIHRAMHAVIDRQKNHGMHFRVLAKALRMSGGDHVHAGTVVGKLEGEREITLGFVDLLRDDFIEKDRSRGVFFTQDWVSMPGVIPVASGGIHVWHMPALTEIFGDDSVLQFGGGTLGHPWGNAPGAAANRVALEACVQARNEGRDLAREGNEIIKAACKWSPELAAACEVWKAIKFEFAPVDTVDKV</sequence>
<reference key="1">
    <citation type="journal article" date="1990" name="J. Biol. Chem.">
        <title>Comparisons of rbcL genes for the large subunit of ribulose-bisphosphate carboxylase from closely related C3 and C4 plant species.</title>
        <authorList>
            <person name="Hudson G.S."/>
            <person name="Mahon J.D."/>
            <person name="Anderson P.A."/>
            <person name="Gibbs M.J."/>
            <person name="Badger M.R."/>
            <person name="Andrews T.J."/>
            <person name="Whitfeld P.R."/>
        </authorList>
    </citation>
    <scope>NUCLEOTIDE SEQUENCE [GENOMIC DNA]</scope>
</reference>
<dbReference type="EC" id="4.1.1.39" evidence="1"/>
<dbReference type="EMBL" id="X55827">
    <property type="protein sequence ID" value="CAA39353.1"/>
    <property type="molecule type" value="Genomic_DNA"/>
</dbReference>
<dbReference type="PIR" id="G34921">
    <property type="entry name" value="RKNULT"/>
</dbReference>
<dbReference type="SMR" id="P19164"/>
<dbReference type="GO" id="GO:0009507">
    <property type="term" value="C:chloroplast"/>
    <property type="evidence" value="ECO:0007669"/>
    <property type="project" value="UniProtKB-SubCell"/>
</dbReference>
<dbReference type="GO" id="GO:0000287">
    <property type="term" value="F:magnesium ion binding"/>
    <property type="evidence" value="ECO:0007669"/>
    <property type="project" value="UniProtKB-UniRule"/>
</dbReference>
<dbReference type="GO" id="GO:0004497">
    <property type="term" value="F:monooxygenase activity"/>
    <property type="evidence" value="ECO:0007669"/>
    <property type="project" value="UniProtKB-KW"/>
</dbReference>
<dbReference type="GO" id="GO:0016984">
    <property type="term" value="F:ribulose-bisphosphate carboxylase activity"/>
    <property type="evidence" value="ECO:0007669"/>
    <property type="project" value="UniProtKB-UniRule"/>
</dbReference>
<dbReference type="GO" id="GO:0009853">
    <property type="term" value="P:photorespiration"/>
    <property type="evidence" value="ECO:0007669"/>
    <property type="project" value="UniProtKB-KW"/>
</dbReference>
<dbReference type="GO" id="GO:0019253">
    <property type="term" value="P:reductive pentose-phosphate cycle"/>
    <property type="evidence" value="ECO:0007669"/>
    <property type="project" value="UniProtKB-UniRule"/>
</dbReference>
<dbReference type="CDD" id="cd08212">
    <property type="entry name" value="RuBisCO_large_I"/>
    <property type="match status" value="1"/>
</dbReference>
<dbReference type="FunFam" id="3.20.20.110:FF:000001">
    <property type="entry name" value="Ribulose bisphosphate carboxylase large chain"/>
    <property type="match status" value="1"/>
</dbReference>
<dbReference type="FunFam" id="3.30.70.150:FF:000001">
    <property type="entry name" value="Ribulose bisphosphate carboxylase large chain"/>
    <property type="match status" value="1"/>
</dbReference>
<dbReference type="Gene3D" id="3.20.20.110">
    <property type="entry name" value="Ribulose bisphosphate carboxylase, large subunit, C-terminal domain"/>
    <property type="match status" value="1"/>
</dbReference>
<dbReference type="Gene3D" id="3.30.70.150">
    <property type="entry name" value="RuBisCO large subunit, N-terminal domain"/>
    <property type="match status" value="1"/>
</dbReference>
<dbReference type="HAMAP" id="MF_01338">
    <property type="entry name" value="RuBisCO_L_type1"/>
    <property type="match status" value="1"/>
</dbReference>
<dbReference type="InterPro" id="IPR033966">
    <property type="entry name" value="RuBisCO"/>
</dbReference>
<dbReference type="InterPro" id="IPR020878">
    <property type="entry name" value="RuBisCo_large_chain_AS"/>
</dbReference>
<dbReference type="InterPro" id="IPR000685">
    <property type="entry name" value="RuBisCO_lsu_C"/>
</dbReference>
<dbReference type="InterPro" id="IPR036376">
    <property type="entry name" value="RuBisCO_lsu_C_sf"/>
</dbReference>
<dbReference type="InterPro" id="IPR017443">
    <property type="entry name" value="RuBisCO_lsu_fd_N"/>
</dbReference>
<dbReference type="InterPro" id="IPR036422">
    <property type="entry name" value="RuBisCO_lsu_N_sf"/>
</dbReference>
<dbReference type="InterPro" id="IPR020888">
    <property type="entry name" value="RuBisCO_lsuI"/>
</dbReference>
<dbReference type="NCBIfam" id="NF003252">
    <property type="entry name" value="PRK04208.1"/>
    <property type="match status" value="1"/>
</dbReference>
<dbReference type="PANTHER" id="PTHR42704">
    <property type="entry name" value="RIBULOSE BISPHOSPHATE CARBOXYLASE"/>
    <property type="match status" value="1"/>
</dbReference>
<dbReference type="PANTHER" id="PTHR42704:SF15">
    <property type="entry name" value="RIBULOSE BISPHOSPHATE CARBOXYLASE LARGE CHAIN"/>
    <property type="match status" value="1"/>
</dbReference>
<dbReference type="Pfam" id="PF00016">
    <property type="entry name" value="RuBisCO_large"/>
    <property type="match status" value="1"/>
</dbReference>
<dbReference type="Pfam" id="PF02788">
    <property type="entry name" value="RuBisCO_large_N"/>
    <property type="match status" value="1"/>
</dbReference>
<dbReference type="SFLD" id="SFLDG01052">
    <property type="entry name" value="RuBisCO"/>
    <property type="match status" value="1"/>
</dbReference>
<dbReference type="SFLD" id="SFLDS00014">
    <property type="entry name" value="RuBisCO"/>
    <property type="match status" value="1"/>
</dbReference>
<dbReference type="SFLD" id="SFLDG00301">
    <property type="entry name" value="RuBisCO-like_proteins"/>
    <property type="match status" value="1"/>
</dbReference>
<dbReference type="SUPFAM" id="SSF51649">
    <property type="entry name" value="RuBisCo, C-terminal domain"/>
    <property type="match status" value="1"/>
</dbReference>
<dbReference type="SUPFAM" id="SSF54966">
    <property type="entry name" value="RuBisCO, large subunit, small (N-terminal) domain"/>
    <property type="match status" value="1"/>
</dbReference>
<dbReference type="PROSITE" id="PS00157">
    <property type="entry name" value="RUBISCO_LARGE"/>
    <property type="match status" value="1"/>
</dbReference>
<organism>
    <name type="scientific">Neurachne tenuifolia</name>
    <dbReference type="NCBI Taxonomy" id="4525"/>
    <lineage>
        <taxon>Eukaryota</taxon>
        <taxon>Viridiplantae</taxon>
        <taxon>Streptophyta</taxon>
        <taxon>Embryophyta</taxon>
        <taxon>Tracheophyta</taxon>
        <taxon>Spermatophyta</taxon>
        <taxon>Magnoliopsida</taxon>
        <taxon>Liliopsida</taxon>
        <taxon>Poales</taxon>
        <taxon>Poaceae</taxon>
        <taxon>PACMAD clade</taxon>
        <taxon>Panicoideae</taxon>
        <taxon>Panicodae</taxon>
        <taxon>Paniceae</taxon>
        <taxon>Neurachninae</taxon>
        <taxon>Neurachne</taxon>
    </lineage>
</organism>
<name>RBL_NEUTE</name>
<comment type="function">
    <text evidence="1">RuBisCO catalyzes two reactions: the carboxylation of D-ribulose 1,5-bisphosphate, the primary event in carbon dioxide fixation, as well as the oxidative fragmentation of the pentose substrate in the photorespiration process. Both reactions occur simultaneously and in competition at the same active site.</text>
</comment>
<comment type="catalytic activity">
    <reaction evidence="1">
        <text>2 (2R)-3-phosphoglycerate + 2 H(+) = D-ribulose 1,5-bisphosphate + CO2 + H2O</text>
        <dbReference type="Rhea" id="RHEA:23124"/>
        <dbReference type="ChEBI" id="CHEBI:15377"/>
        <dbReference type="ChEBI" id="CHEBI:15378"/>
        <dbReference type="ChEBI" id="CHEBI:16526"/>
        <dbReference type="ChEBI" id="CHEBI:57870"/>
        <dbReference type="ChEBI" id="CHEBI:58272"/>
        <dbReference type="EC" id="4.1.1.39"/>
    </reaction>
</comment>
<comment type="catalytic activity">
    <reaction evidence="1">
        <text>D-ribulose 1,5-bisphosphate + O2 = 2-phosphoglycolate + (2R)-3-phosphoglycerate + 2 H(+)</text>
        <dbReference type="Rhea" id="RHEA:36631"/>
        <dbReference type="ChEBI" id="CHEBI:15378"/>
        <dbReference type="ChEBI" id="CHEBI:15379"/>
        <dbReference type="ChEBI" id="CHEBI:57870"/>
        <dbReference type="ChEBI" id="CHEBI:58033"/>
        <dbReference type="ChEBI" id="CHEBI:58272"/>
    </reaction>
</comment>
<comment type="cofactor">
    <cofactor evidence="1">
        <name>Mg(2+)</name>
        <dbReference type="ChEBI" id="CHEBI:18420"/>
    </cofactor>
    <text evidence="1">Binds 1 Mg(2+) ion per subunit.</text>
</comment>
<comment type="subunit">
    <text evidence="1">Heterohexadecamer of 8 large chains and 8 small chains; disulfide-linked. The disulfide link is formed within the large subunit homodimers.</text>
</comment>
<comment type="subcellular location">
    <subcellularLocation>
        <location>Plastid</location>
        <location>Chloroplast</location>
    </subcellularLocation>
</comment>
<comment type="PTM">
    <text evidence="1">The disulfide bond which can form in the large chain dimeric partners within the hexadecamer appears to be associated with oxidative stress and protein turnover.</text>
</comment>
<comment type="miscellaneous">
    <text evidence="1">The basic functional RuBisCO is composed of a large chain homodimer in a 'head-to-tail' conformation. In form I RuBisCO this homodimer is arranged in a barrel-like tetramer with the small subunits forming a tetrameric 'cap' on each end of the 'barrel'.</text>
</comment>
<comment type="similarity">
    <text evidence="1">Belongs to the RuBisCO large chain family. Type I subfamily.</text>
</comment>
<protein>
    <recommendedName>
        <fullName evidence="1">Ribulose bisphosphate carboxylase large chain</fullName>
        <shortName evidence="1">RuBisCO large subunit</shortName>
        <ecNumber evidence="1">4.1.1.39</ecNumber>
    </recommendedName>
</protein>
<accession>P19164</accession>